<reference key="1">
    <citation type="journal article" date="2001" name="Proc. Natl. Acad. Sci. U.S.A.">
        <title>Cloning and characterization of PIMT, a protein with a methyltransferase domain, which interacts with and enhances nuclear receptor coactivator PRIP function.</title>
        <authorList>
            <person name="Zhu Y.-J."/>
            <person name="Qi C."/>
            <person name="Cao W.-Q."/>
            <person name="Yeldandi A.V."/>
            <person name="Rao M.S."/>
            <person name="Reddy J.K."/>
        </authorList>
    </citation>
    <scope>NUCLEOTIDE SEQUENCE [MRNA]</scope>
    <scope>FUNCTION</scope>
    <scope>INTERACTION WITH NCOA6</scope>
    <scope>SUBCELLULAR LOCATION</scope>
    <scope>TISSUE SPECIFICITY</scope>
    <source>
        <strain>BALB/cJ</strain>
        <tissue>Spleen</tissue>
    </source>
</reference>
<reference key="2">
    <citation type="journal article" date="2009" name="PLoS Biol.">
        <title>Lineage-specific biology revealed by a finished genome assembly of the mouse.</title>
        <authorList>
            <person name="Church D.M."/>
            <person name="Goodstadt L."/>
            <person name="Hillier L.W."/>
            <person name="Zody M.C."/>
            <person name="Goldstein S."/>
            <person name="She X."/>
            <person name="Bult C.J."/>
            <person name="Agarwala R."/>
            <person name="Cherry J.L."/>
            <person name="DiCuccio M."/>
            <person name="Hlavina W."/>
            <person name="Kapustin Y."/>
            <person name="Meric P."/>
            <person name="Maglott D."/>
            <person name="Birtle Z."/>
            <person name="Marques A.C."/>
            <person name="Graves T."/>
            <person name="Zhou S."/>
            <person name="Teague B."/>
            <person name="Potamousis K."/>
            <person name="Churas C."/>
            <person name="Place M."/>
            <person name="Herschleb J."/>
            <person name="Runnheim R."/>
            <person name="Forrest D."/>
            <person name="Amos-Landgraf J."/>
            <person name="Schwartz D.C."/>
            <person name="Cheng Z."/>
            <person name="Lindblad-Toh K."/>
            <person name="Eichler E.E."/>
            <person name="Ponting C.P."/>
        </authorList>
    </citation>
    <scope>NUCLEOTIDE SEQUENCE [LARGE SCALE GENOMIC DNA]</scope>
    <source>
        <strain>C57BL/6J</strain>
    </source>
</reference>
<reference key="3">
    <citation type="journal article" date="2004" name="Genome Res.">
        <title>The status, quality, and expansion of the NIH full-length cDNA project: the Mammalian Gene Collection (MGC).</title>
        <authorList>
            <consortium name="The MGC Project Team"/>
        </authorList>
    </citation>
    <scope>NUCLEOTIDE SEQUENCE [LARGE SCALE MRNA]</scope>
    <source>
        <tissue>Limb</tissue>
        <tissue>Liver</tissue>
        <tissue>Mammary tumor</tissue>
    </source>
</reference>
<reference key="4">
    <citation type="journal article" date="2010" name="Cell">
        <title>A tissue-specific atlas of mouse protein phosphorylation and expression.</title>
        <authorList>
            <person name="Huttlin E.L."/>
            <person name="Jedrychowski M.P."/>
            <person name="Elias J.E."/>
            <person name="Goswami T."/>
            <person name="Rad R."/>
            <person name="Beausoleil S.A."/>
            <person name="Villen J."/>
            <person name="Haas W."/>
            <person name="Sowa M.E."/>
            <person name="Gygi S.P."/>
        </authorList>
    </citation>
    <scope>PHOSPHORYLATION [LARGE SCALE ANALYSIS] AT SER-152 AND SER-431</scope>
    <scope>IDENTIFICATION BY MASS SPECTROMETRY [LARGE SCALE ANALYSIS]</scope>
    <source>
        <tissue>Brain</tissue>
        <tissue>Brown adipose tissue</tissue>
        <tissue>Heart</tissue>
        <tissue>Kidney</tissue>
        <tissue>Lung</tissue>
        <tissue>Pancreas</tissue>
        <tissue>Spleen</tissue>
    </source>
</reference>
<evidence type="ECO:0000250" key="1"/>
<evidence type="ECO:0000250" key="2">
    <source>
        <dbReference type="UniProtKB" id="Q96RS0"/>
    </source>
</evidence>
<evidence type="ECO:0000256" key="3">
    <source>
        <dbReference type="SAM" id="MobiDB-lite"/>
    </source>
</evidence>
<evidence type="ECO:0000269" key="4">
    <source>
    </source>
</evidence>
<evidence type="ECO:0000305" key="5"/>
<evidence type="ECO:0007744" key="6">
    <source>
    </source>
</evidence>
<gene>
    <name type="primary">Tgs1</name>
    <name type="synonym">Ncoa6ip</name>
    <name type="synonym">Pimt</name>
</gene>
<protein>
    <recommendedName>
        <fullName>Trimethylguanosine synthase</fullName>
        <ecNumber evidence="2">2.1.1.-</ecNumber>
    </recommendedName>
    <alternativeName>
        <fullName>Cap-specific guanine-N(2) methyltransferase</fullName>
    </alternativeName>
    <alternativeName>
        <fullName>Nuclear receptor coactivator 6-interacting protein</fullName>
    </alternativeName>
    <alternativeName>
        <fullName>PRIP-interacting protein with methyltransferase motif</fullName>
        <shortName>PIMT</shortName>
        <shortName>PIPMT</shortName>
    </alternativeName>
</protein>
<name>TGS1_MOUSE</name>
<dbReference type="EC" id="2.1.1.-" evidence="2"/>
<dbReference type="EMBL" id="AF389908">
    <property type="protein sequence ID" value="AAK84355.1"/>
    <property type="molecule type" value="mRNA"/>
</dbReference>
<dbReference type="EMBL" id="AL732617">
    <property type="status" value="NOT_ANNOTATED_CDS"/>
    <property type="molecule type" value="Genomic_DNA"/>
</dbReference>
<dbReference type="EMBL" id="BC026368">
    <property type="protein sequence ID" value="AAH26368.1"/>
    <property type="molecule type" value="mRNA"/>
</dbReference>
<dbReference type="EMBL" id="BC058183">
    <property type="protein sequence ID" value="AAH58183.1"/>
    <property type="molecule type" value="mRNA"/>
</dbReference>
<dbReference type="EMBL" id="BC075728">
    <property type="protein sequence ID" value="AAH75728.1"/>
    <property type="molecule type" value="mRNA"/>
</dbReference>
<dbReference type="CCDS" id="CCDS17938.1"/>
<dbReference type="RefSeq" id="NP_473430.3">
    <property type="nucleotide sequence ID" value="NM_054089.4"/>
</dbReference>
<dbReference type="SMR" id="Q923W1"/>
<dbReference type="BioGRID" id="228104">
    <property type="interactions" value="24"/>
</dbReference>
<dbReference type="FunCoup" id="Q923W1">
    <property type="interactions" value="4787"/>
</dbReference>
<dbReference type="IntAct" id="Q923W1">
    <property type="interactions" value="21"/>
</dbReference>
<dbReference type="STRING" id="10090.ENSMUSP00000054112"/>
<dbReference type="iPTMnet" id="Q923W1"/>
<dbReference type="PhosphoSitePlus" id="Q923W1"/>
<dbReference type="SwissPalm" id="Q923W1"/>
<dbReference type="jPOST" id="Q923W1"/>
<dbReference type="PaxDb" id="10090-ENSMUSP00000054112"/>
<dbReference type="PeptideAtlas" id="Q923W1"/>
<dbReference type="ProteomicsDB" id="262906"/>
<dbReference type="Pumba" id="Q923W1"/>
<dbReference type="Antibodypedia" id="11709">
    <property type="antibodies" value="159 antibodies from 26 providers"/>
</dbReference>
<dbReference type="DNASU" id="116940"/>
<dbReference type="Ensembl" id="ENSMUST00000052712.6">
    <property type="protein sequence ID" value="ENSMUSP00000054112.6"/>
    <property type="gene ID" value="ENSMUSG00000028233.7"/>
</dbReference>
<dbReference type="GeneID" id="116940"/>
<dbReference type="KEGG" id="mmu:116940"/>
<dbReference type="UCSC" id="uc008rwi.2">
    <property type="organism name" value="mouse"/>
</dbReference>
<dbReference type="AGR" id="MGI:2151797"/>
<dbReference type="CTD" id="96764"/>
<dbReference type="MGI" id="MGI:2151797">
    <property type="gene designation" value="Tgs1"/>
</dbReference>
<dbReference type="VEuPathDB" id="HostDB:ENSMUSG00000028233"/>
<dbReference type="eggNOG" id="KOG2730">
    <property type="taxonomic scope" value="Eukaryota"/>
</dbReference>
<dbReference type="GeneTree" id="ENSGT00390000018056"/>
<dbReference type="HOGENOM" id="CLU_016892_0_0_1"/>
<dbReference type="InParanoid" id="Q923W1"/>
<dbReference type="OMA" id="QSEPHNG"/>
<dbReference type="OrthoDB" id="194443at2759"/>
<dbReference type="PhylomeDB" id="Q923W1"/>
<dbReference type="TreeFam" id="TF313065"/>
<dbReference type="Reactome" id="R-MMU-191859">
    <property type="pathway name" value="snRNP Assembly"/>
</dbReference>
<dbReference type="Reactome" id="R-MMU-400206">
    <property type="pathway name" value="Regulation of lipid metabolism by PPARalpha"/>
</dbReference>
<dbReference type="Reactome" id="R-MMU-9707564">
    <property type="pathway name" value="Cytoprotection by HMOX1"/>
</dbReference>
<dbReference type="BioGRID-ORCS" id="116940">
    <property type="hits" value="23 hits in 83 CRISPR screens"/>
</dbReference>
<dbReference type="ChiTaRS" id="Tgs1">
    <property type="organism name" value="mouse"/>
</dbReference>
<dbReference type="PRO" id="PR:Q923W1"/>
<dbReference type="Proteomes" id="UP000000589">
    <property type="component" value="Chromosome 4"/>
</dbReference>
<dbReference type="RNAct" id="Q923W1">
    <property type="molecule type" value="protein"/>
</dbReference>
<dbReference type="Bgee" id="ENSMUSG00000028233">
    <property type="expression patterns" value="Expressed in optic fissure and 260 other cell types or tissues"/>
</dbReference>
<dbReference type="GO" id="GO:0015030">
    <property type="term" value="C:Cajal body"/>
    <property type="evidence" value="ECO:0007669"/>
    <property type="project" value="UniProtKB-SubCell"/>
</dbReference>
<dbReference type="GO" id="GO:0005737">
    <property type="term" value="C:cytoplasm"/>
    <property type="evidence" value="ECO:0000266"/>
    <property type="project" value="MGI"/>
</dbReference>
<dbReference type="GO" id="GO:0005829">
    <property type="term" value="C:cytosol"/>
    <property type="evidence" value="ECO:0007669"/>
    <property type="project" value="Ensembl"/>
</dbReference>
<dbReference type="GO" id="GO:0005730">
    <property type="term" value="C:nucleolus"/>
    <property type="evidence" value="ECO:0007669"/>
    <property type="project" value="UniProtKB-SubCell"/>
</dbReference>
<dbReference type="GO" id="GO:0005634">
    <property type="term" value="C:nucleus"/>
    <property type="evidence" value="ECO:0000266"/>
    <property type="project" value="MGI"/>
</dbReference>
<dbReference type="GO" id="GO:0071164">
    <property type="term" value="F:RNA cap trimethylguanosine synthase activity"/>
    <property type="evidence" value="ECO:0007669"/>
    <property type="project" value="Ensembl"/>
</dbReference>
<dbReference type="CDD" id="cd02440">
    <property type="entry name" value="AdoMet_MTases"/>
    <property type="match status" value="1"/>
</dbReference>
<dbReference type="FunFam" id="3.40.50.150:FF:000066">
    <property type="entry name" value="Trimethylguanosine synthase 1"/>
    <property type="match status" value="1"/>
</dbReference>
<dbReference type="Gene3D" id="3.40.50.150">
    <property type="entry name" value="Vaccinia Virus protein VP39"/>
    <property type="match status" value="1"/>
</dbReference>
<dbReference type="InterPro" id="IPR019012">
    <property type="entry name" value="RNA_cap_Gua-N2-MeTrfase"/>
</dbReference>
<dbReference type="InterPro" id="IPR029063">
    <property type="entry name" value="SAM-dependent_MTases_sf"/>
</dbReference>
<dbReference type="PANTHER" id="PTHR14741">
    <property type="entry name" value="S-ADENOSYLMETHIONINE-DEPENDENT METHYLTRANSFERASE RELATED"/>
    <property type="match status" value="1"/>
</dbReference>
<dbReference type="PANTHER" id="PTHR14741:SF32">
    <property type="entry name" value="TRIMETHYLGUANOSINE SYNTHASE"/>
    <property type="match status" value="1"/>
</dbReference>
<dbReference type="Pfam" id="PF09445">
    <property type="entry name" value="Methyltransf_15"/>
    <property type="match status" value="1"/>
</dbReference>
<dbReference type="SUPFAM" id="SSF53335">
    <property type="entry name" value="S-adenosyl-L-methionine-dependent methyltransferases"/>
    <property type="match status" value="1"/>
</dbReference>
<feature type="chain" id="PRO_0000204469" description="Trimethylguanosine synthase">
    <location>
        <begin position="1"/>
        <end position="853"/>
    </location>
</feature>
<feature type="region of interest" description="Disordered" evidence="3">
    <location>
        <begin position="54"/>
        <end position="84"/>
    </location>
</feature>
<feature type="region of interest" description="Disordered" evidence="3">
    <location>
        <begin position="328"/>
        <end position="437"/>
    </location>
</feature>
<feature type="region of interest" description="Disordered" evidence="3">
    <location>
        <begin position="523"/>
        <end position="549"/>
    </location>
</feature>
<feature type="region of interest" description="Disordered" evidence="3">
    <location>
        <begin position="594"/>
        <end position="623"/>
    </location>
</feature>
<feature type="compositionally biased region" description="Polar residues" evidence="3">
    <location>
        <begin position="69"/>
        <end position="80"/>
    </location>
</feature>
<feature type="compositionally biased region" description="Basic and acidic residues" evidence="3">
    <location>
        <begin position="365"/>
        <end position="383"/>
    </location>
</feature>
<feature type="compositionally biased region" description="Acidic residues" evidence="3">
    <location>
        <begin position="424"/>
        <end position="435"/>
    </location>
</feature>
<feature type="compositionally biased region" description="Polar residues" evidence="3">
    <location>
        <begin position="526"/>
        <end position="541"/>
    </location>
</feature>
<feature type="compositionally biased region" description="Basic residues" evidence="3">
    <location>
        <begin position="612"/>
        <end position="621"/>
    </location>
</feature>
<feature type="binding site" evidence="1">
    <location>
        <position position="711"/>
    </location>
    <ligand>
        <name>S-adenosyl-L-methionine</name>
        <dbReference type="ChEBI" id="CHEBI:59789"/>
    </ligand>
</feature>
<feature type="modified residue" description="Phosphothreonine" evidence="2">
    <location>
        <position position="61"/>
    </location>
</feature>
<feature type="modified residue" description="Phosphoserine" evidence="2">
    <location>
        <position position="81"/>
    </location>
</feature>
<feature type="modified residue" description="Phosphoserine" evidence="2">
    <location>
        <position position="85"/>
    </location>
</feature>
<feature type="modified residue" description="Phosphoserine" evidence="2">
    <location>
        <position position="92"/>
    </location>
</feature>
<feature type="modified residue" description="Phosphoserine" evidence="2">
    <location>
        <position position="139"/>
    </location>
</feature>
<feature type="modified residue" description="Phosphotyrosine" evidence="2">
    <location>
        <position position="144"/>
    </location>
</feature>
<feature type="modified residue" description="Phosphoserine" evidence="6">
    <location>
        <position position="152"/>
    </location>
</feature>
<feature type="modified residue" description="Phosphoserine" evidence="2">
    <location>
        <position position="405"/>
    </location>
</feature>
<feature type="modified residue" description="Phosphoserine" evidence="6">
    <location>
        <position position="431"/>
    </location>
</feature>
<feature type="modified residue" description="Phosphoserine" evidence="2">
    <location>
        <position position="572"/>
    </location>
</feature>
<feature type="sequence conflict" description="In Ref. 3; AAH75728." evidence="5" ref="3">
    <original>F</original>
    <variation>L</variation>
    <location>
        <position position="512"/>
    </location>
</feature>
<feature type="sequence conflict" description="In Ref. 1; AAK84355." evidence="5" ref="1">
    <original>V</original>
    <variation>G</variation>
    <location>
        <position position="633"/>
    </location>
</feature>
<organism>
    <name type="scientific">Mus musculus</name>
    <name type="common">Mouse</name>
    <dbReference type="NCBI Taxonomy" id="10090"/>
    <lineage>
        <taxon>Eukaryota</taxon>
        <taxon>Metazoa</taxon>
        <taxon>Chordata</taxon>
        <taxon>Craniata</taxon>
        <taxon>Vertebrata</taxon>
        <taxon>Euteleostomi</taxon>
        <taxon>Mammalia</taxon>
        <taxon>Eutheria</taxon>
        <taxon>Euarchontoglires</taxon>
        <taxon>Glires</taxon>
        <taxon>Rodentia</taxon>
        <taxon>Myomorpha</taxon>
        <taxon>Muroidea</taxon>
        <taxon>Muridae</taxon>
        <taxon>Murinae</taxon>
        <taxon>Mus</taxon>
        <taxon>Mus</taxon>
    </lineage>
</organism>
<sequence length="853" mass="96790">MCCEKWNHVAEMLLFIEDREEEYKILCLCSRAFVEDRKLYNLGLKGYYVKSSGNNAGDQGTEEEEDGHSNGTAESHSPNESDLDSEAKLMRSMGLPIQFGRMSSHENFEMSMNARNKAKVKQKRRKHQKRYLDEMVRESWRNDYEEDDLVVSDDPSSVEHCENNRTCEIQSKAGSEVENLPVENTLAPKLEVPENWEKYWNEYGEGLLWQSWQEKYPDQTLSSEPWNLPDTKEEWEQHYSQLYWYYLEQFQYWEAQGWTFTASQNCDKDVYTSHTEVDQNAESSLKADVMTFSSSPNIVEDEIPGSNDNDHNEIITAINNITVSAEKVEQSQLDSSQHCDEPLSEITGKECPASGGSDSCNGTPKENDISENRSSDQPAKELQESSGTNKGKHRPHHNGADGHESDDDPPEHKPSKVKRSHELDVDENPDSEVDDNGFLLGFKHGSGQKYGGIPNFSHRQVRYLEKNVKYKSKYLDLRKQMPVKSKHILFTEDSGKPFVVCKSKVRSKVEKFLKWVNERVDEETSQDSLSQNKMQDTCTSSDSEEQDMSLEKADNLMETRDPEPEKCQIISSATELEAEKSEVGSLVATVPENCSTEEIPNSPHAETEVEIKKKKKKNKNKKINDLPPEIASVPELAKYWAQRYRLFSRFDDGIKLDKEGWFSVTPEKIAEHIAGRVSQAFRCDVVVDAFCGVGGNTIQFALTGKRVIAIDIDPVKIDLARNNAEVYGIADKIEFICGDFLLLAPCLKADVVFLSPPWGGPDYATAETFDIRTMMSPDGFEIFRLSQKITNNIVYFLPRNADIDQVASLAGLGGQVEIEQNFLNNKLKTITAYFGDLIRRPALLKTSTSEAEV</sequence>
<keyword id="KW-0963">Cytoplasm</keyword>
<keyword id="KW-0489">Methyltransferase</keyword>
<keyword id="KW-0539">Nucleus</keyword>
<keyword id="KW-0597">Phosphoprotein</keyword>
<keyword id="KW-1185">Reference proteome</keyword>
<keyword id="KW-0949">S-adenosyl-L-methionine</keyword>
<keyword id="KW-0804">Transcription</keyword>
<keyword id="KW-0805">Transcription regulation</keyword>
<keyword id="KW-0808">Transferase</keyword>
<comment type="function">
    <text evidence="2 4">Catalyzes the 2 serial methylation steps for the conversion of the 7-monomethylguanosine (m(7)G) caps of snRNAs and snoRNAs to a 2,2,7-trimethylguanosine (m(2,2,7)G) cap structure. The enzyme is specific for guanine, and N7 methylation must precede N2 methylation. Hypermethylation of the m7G cap of U snRNAs leads to their concentration in nuclear foci, their colocalization with coilin and the formation of canonical Cajal bodies (CBs). Plays a role in transcriptional regulation (By similarity).</text>
</comment>
<comment type="catalytic activity">
    <reaction evidence="2">
        <text>a 5'-end (N(7)-methyl 5'-triphosphoguanosine)-ribonucleoside in snRNA + S-adenosyl-L-methionine = a 5'-end (N(2),N(7)-dimethyl 5'-triphosphoguanosine)-ribonucleoside in snRNA + S-adenosyl-L-homocysteine + H(+)</text>
        <dbReference type="Rhea" id="RHEA:78471"/>
        <dbReference type="Rhea" id="RHEA-COMP:19085"/>
        <dbReference type="Rhea" id="RHEA-COMP:19087"/>
        <dbReference type="ChEBI" id="CHEBI:15378"/>
        <dbReference type="ChEBI" id="CHEBI:57856"/>
        <dbReference type="ChEBI" id="CHEBI:59789"/>
        <dbReference type="ChEBI" id="CHEBI:156461"/>
        <dbReference type="ChEBI" id="CHEBI:172880"/>
    </reaction>
    <physiologicalReaction direction="left-to-right" evidence="2">
        <dbReference type="Rhea" id="RHEA:78472"/>
    </physiologicalReaction>
</comment>
<comment type="catalytic activity">
    <reaction evidence="2">
        <text>a 5'-end (N(7)-methyl 5'-triphosphoguanosine)-ribonucleoside in snoRNA + S-adenosyl-L-methionine = a 5'-end (N(2),N(7)-dimethyl 5'-triphosphoguanosine)-ribonucleoside in snoRNA + S-adenosyl-L-homocysteine + H(+)</text>
        <dbReference type="Rhea" id="RHEA:78475"/>
        <dbReference type="Rhea" id="RHEA-COMP:19086"/>
        <dbReference type="Rhea" id="RHEA-COMP:19088"/>
        <dbReference type="ChEBI" id="CHEBI:15378"/>
        <dbReference type="ChEBI" id="CHEBI:57856"/>
        <dbReference type="ChEBI" id="CHEBI:59789"/>
        <dbReference type="ChEBI" id="CHEBI:156461"/>
        <dbReference type="ChEBI" id="CHEBI:172880"/>
    </reaction>
    <physiologicalReaction direction="left-to-right" evidence="2">
        <dbReference type="Rhea" id="RHEA:78476"/>
    </physiologicalReaction>
</comment>
<comment type="catalytic activity">
    <reaction evidence="2">
        <text>a 5'-end (N(2),N(7)-dimethyl 5'-triphosphoguanosine)-ribonucleoside in snRNA + S-adenosyl-L-methionine = a 5'-end (N(2),N(2),N(7)-trimethyl 5'-triphosphoguanosine)-ribonucleoside in snRNA + S-adenosyl-L-homocysteine + H(+)</text>
        <dbReference type="Rhea" id="RHEA:78479"/>
        <dbReference type="Rhea" id="RHEA-COMP:19087"/>
        <dbReference type="Rhea" id="RHEA-COMP:19089"/>
        <dbReference type="ChEBI" id="CHEBI:15378"/>
        <dbReference type="ChEBI" id="CHEBI:57856"/>
        <dbReference type="ChEBI" id="CHEBI:59789"/>
        <dbReference type="ChEBI" id="CHEBI:167623"/>
        <dbReference type="ChEBI" id="CHEBI:172880"/>
    </reaction>
    <physiologicalReaction direction="left-to-right" evidence="2">
        <dbReference type="Rhea" id="RHEA:78480"/>
    </physiologicalReaction>
</comment>
<comment type="catalytic activity">
    <reaction evidence="2">
        <text>a 5'-end (N(2),N(7)-dimethyl 5'-triphosphoguanosine)-ribonucleoside in snoRNA + S-adenosyl-L-methionine = a 5'-end (N(2),N(2),N(7)-trimethyl 5'-triphosphoguanosine)-ribonucleoside in snoRNA + S-adenosyl-L-homocysteine + H(+)</text>
        <dbReference type="Rhea" id="RHEA:78507"/>
        <dbReference type="Rhea" id="RHEA-COMP:19088"/>
        <dbReference type="Rhea" id="RHEA-COMP:19090"/>
        <dbReference type="ChEBI" id="CHEBI:15378"/>
        <dbReference type="ChEBI" id="CHEBI:57856"/>
        <dbReference type="ChEBI" id="CHEBI:59789"/>
        <dbReference type="ChEBI" id="CHEBI:167623"/>
        <dbReference type="ChEBI" id="CHEBI:172880"/>
    </reaction>
    <physiologicalReaction direction="left-to-right" evidence="2">
        <dbReference type="Rhea" id="RHEA:78508"/>
    </physiologicalReaction>
</comment>
<comment type="subunit">
    <text evidence="1">May form homooligomers. Interacts with CREBBP/CBP, EED/WAIT1, EP300/P300, NCOA6/PRIP, PPARBP/PBP and SMN (By similarity).</text>
</comment>
<comment type="subcellular location">
    <subcellularLocation>
        <location evidence="2">Cytoplasm</location>
    </subcellularLocation>
    <subcellularLocation>
        <location evidence="4">Nucleus</location>
        <location evidence="4">Cajal body</location>
    </subcellularLocation>
    <subcellularLocation>
        <location evidence="2">Nucleus</location>
        <location evidence="2">Nucleolus</location>
    </subcellularLocation>
</comment>
<comment type="tissue specificity">
    <text evidence="4">Ubiquitously expressed.</text>
</comment>
<comment type="similarity">
    <text evidence="5">Belongs to the methyltransferase superfamily. Trimethylguanosine synthase family.</text>
</comment>
<accession>Q923W1</accession>
<accession>A2AJF7</accession>
<accession>Q6DI60</accession>
<accession>Q6PEA7</accession>
<accession>Q8R0W9</accession>
<proteinExistence type="evidence at protein level"/>